<name>RS19_HAEIE</name>
<reference key="1">
    <citation type="journal article" date="2007" name="Genome Biol.">
        <title>Characterization and modeling of the Haemophilus influenzae core and supragenomes based on the complete genomic sequences of Rd and 12 clinical nontypeable strains.</title>
        <authorList>
            <person name="Hogg J.S."/>
            <person name="Hu F.Z."/>
            <person name="Janto B."/>
            <person name="Boissy R."/>
            <person name="Hayes J."/>
            <person name="Keefe R."/>
            <person name="Post J.C."/>
            <person name="Ehrlich G.D."/>
        </authorList>
    </citation>
    <scope>NUCLEOTIDE SEQUENCE [LARGE SCALE GENOMIC DNA]</scope>
    <source>
        <strain>PittEE</strain>
    </source>
</reference>
<proteinExistence type="inferred from homology"/>
<evidence type="ECO:0000255" key="1">
    <source>
        <dbReference type="HAMAP-Rule" id="MF_00531"/>
    </source>
</evidence>
<evidence type="ECO:0000305" key="2"/>
<gene>
    <name evidence="1" type="primary">rpsS</name>
    <name type="ordered locus">CGSHiEE_08155</name>
</gene>
<comment type="function">
    <text evidence="1">Protein S19 forms a complex with S13 that binds strongly to the 16S ribosomal RNA.</text>
</comment>
<comment type="similarity">
    <text evidence="1">Belongs to the universal ribosomal protein uS19 family.</text>
</comment>
<sequence length="91" mass="10259">MPRSLKKGPFLDLHLLKKVEKAVESGDKKPIKTWSRRSMIIPSMIGLTIAVHNGRQHVPVYVSDEMIGHKLGEFAPTRTYRGHAADKKAKK</sequence>
<organism>
    <name type="scientific">Haemophilus influenzae (strain PittEE)</name>
    <dbReference type="NCBI Taxonomy" id="374930"/>
    <lineage>
        <taxon>Bacteria</taxon>
        <taxon>Pseudomonadati</taxon>
        <taxon>Pseudomonadota</taxon>
        <taxon>Gammaproteobacteria</taxon>
        <taxon>Pasteurellales</taxon>
        <taxon>Pasteurellaceae</taxon>
        <taxon>Haemophilus</taxon>
    </lineage>
</organism>
<keyword id="KW-0687">Ribonucleoprotein</keyword>
<keyword id="KW-0689">Ribosomal protein</keyword>
<keyword id="KW-0694">RNA-binding</keyword>
<keyword id="KW-0699">rRNA-binding</keyword>
<dbReference type="EMBL" id="CP000671">
    <property type="protein sequence ID" value="ABQ98944.1"/>
    <property type="molecule type" value="Genomic_DNA"/>
</dbReference>
<dbReference type="SMR" id="A5UDU3"/>
<dbReference type="KEGG" id="hip:CGSHiEE_08155"/>
<dbReference type="HOGENOM" id="CLU_144911_0_1_6"/>
<dbReference type="GO" id="GO:0005737">
    <property type="term" value="C:cytoplasm"/>
    <property type="evidence" value="ECO:0007669"/>
    <property type="project" value="UniProtKB-ARBA"/>
</dbReference>
<dbReference type="GO" id="GO:0015935">
    <property type="term" value="C:small ribosomal subunit"/>
    <property type="evidence" value="ECO:0007669"/>
    <property type="project" value="InterPro"/>
</dbReference>
<dbReference type="GO" id="GO:0019843">
    <property type="term" value="F:rRNA binding"/>
    <property type="evidence" value="ECO:0007669"/>
    <property type="project" value="UniProtKB-UniRule"/>
</dbReference>
<dbReference type="GO" id="GO:0003735">
    <property type="term" value="F:structural constituent of ribosome"/>
    <property type="evidence" value="ECO:0007669"/>
    <property type="project" value="InterPro"/>
</dbReference>
<dbReference type="GO" id="GO:0000028">
    <property type="term" value="P:ribosomal small subunit assembly"/>
    <property type="evidence" value="ECO:0007669"/>
    <property type="project" value="TreeGrafter"/>
</dbReference>
<dbReference type="GO" id="GO:0006412">
    <property type="term" value="P:translation"/>
    <property type="evidence" value="ECO:0007669"/>
    <property type="project" value="UniProtKB-UniRule"/>
</dbReference>
<dbReference type="FunFam" id="3.30.860.10:FF:000001">
    <property type="entry name" value="30S ribosomal protein S19"/>
    <property type="match status" value="1"/>
</dbReference>
<dbReference type="Gene3D" id="3.30.860.10">
    <property type="entry name" value="30s Ribosomal Protein S19, Chain A"/>
    <property type="match status" value="1"/>
</dbReference>
<dbReference type="HAMAP" id="MF_00531">
    <property type="entry name" value="Ribosomal_uS19"/>
    <property type="match status" value="1"/>
</dbReference>
<dbReference type="InterPro" id="IPR002222">
    <property type="entry name" value="Ribosomal_uS19"/>
</dbReference>
<dbReference type="InterPro" id="IPR005732">
    <property type="entry name" value="Ribosomal_uS19_bac-type"/>
</dbReference>
<dbReference type="InterPro" id="IPR020934">
    <property type="entry name" value="Ribosomal_uS19_CS"/>
</dbReference>
<dbReference type="InterPro" id="IPR023575">
    <property type="entry name" value="Ribosomal_uS19_SF"/>
</dbReference>
<dbReference type="NCBIfam" id="TIGR01050">
    <property type="entry name" value="rpsS_bact"/>
    <property type="match status" value="1"/>
</dbReference>
<dbReference type="PANTHER" id="PTHR11880">
    <property type="entry name" value="RIBOSOMAL PROTEIN S19P FAMILY MEMBER"/>
    <property type="match status" value="1"/>
</dbReference>
<dbReference type="PANTHER" id="PTHR11880:SF8">
    <property type="entry name" value="SMALL RIBOSOMAL SUBUNIT PROTEIN US19M"/>
    <property type="match status" value="1"/>
</dbReference>
<dbReference type="Pfam" id="PF00203">
    <property type="entry name" value="Ribosomal_S19"/>
    <property type="match status" value="1"/>
</dbReference>
<dbReference type="PIRSF" id="PIRSF002144">
    <property type="entry name" value="Ribosomal_S19"/>
    <property type="match status" value="1"/>
</dbReference>
<dbReference type="PRINTS" id="PR00975">
    <property type="entry name" value="RIBOSOMALS19"/>
</dbReference>
<dbReference type="SUPFAM" id="SSF54570">
    <property type="entry name" value="Ribosomal protein S19"/>
    <property type="match status" value="1"/>
</dbReference>
<dbReference type="PROSITE" id="PS00323">
    <property type="entry name" value="RIBOSOMAL_S19"/>
    <property type="match status" value="1"/>
</dbReference>
<protein>
    <recommendedName>
        <fullName evidence="1">Small ribosomal subunit protein uS19</fullName>
    </recommendedName>
    <alternativeName>
        <fullName evidence="2">30S ribosomal protein S19</fullName>
    </alternativeName>
</protein>
<feature type="chain" id="PRO_1000051055" description="Small ribosomal subunit protein uS19">
    <location>
        <begin position="1"/>
        <end position="91"/>
    </location>
</feature>
<accession>A5UDU3</accession>